<feature type="chain" id="PRO_0000311235" description="Major facilitator superfamily domain-containing protein 8">
    <location>
        <begin position="1"/>
        <end position="510"/>
    </location>
</feature>
<feature type="topological domain" description="Cytoplasmic" evidence="2">
    <location>
        <begin position="1"/>
        <end position="38"/>
    </location>
</feature>
<feature type="transmembrane region" description="Helical" evidence="2">
    <location>
        <begin position="39"/>
        <end position="59"/>
    </location>
</feature>
<feature type="topological domain" description="Extracellular" evidence="2">
    <location>
        <begin position="60"/>
        <end position="72"/>
    </location>
</feature>
<feature type="transmembrane region" description="Helical" evidence="2">
    <location>
        <begin position="73"/>
        <end position="93"/>
    </location>
</feature>
<feature type="topological domain" description="Cytoplasmic" evidence="2">
    <location>
        <begin position="94"/>
        <end position="103"/>
    </location>
</feature>
<feature type="transmembrane region" description="Helical" evidence="2">
    <location>
        <begin position="104"/>
        <end position="124"/>
    </location>
</feature>
<feature type="topological domain" description="Extracellular" evidence="2">
    <location>
        <begin position="125"/>
        <end position="132"/>
    </location>
</feature>
<feature type="transmembrane region" description="Helical" evidence="2">
    <location>
        <begin position="133"/>
        <end position="155"/>
    </location>
</feature>
<feature type="topological domain" description="Cytoplasmic" evidence="2">
    <location>
        <begin position="156"/>
        <end position="171"/>
    </location>
</feature>
<feature type="transmembrane region" description="Helical" evidence="2">
    <location>
        <begin position="172"/>
        <end position="192"/>
    </location>
</feature>
<feature type="topological domain" description="Extracellular" evidence="2">
    <location>
        <begin position="193"/>
        <end position="209"/>
    </location>
</feature>
<feature type="transmembrane region" description="Helical" evidence="2">
    <location>
        <begin position="210"/>
        <end position="230"/>
    </location>
</feature>
<feature type="topological domain" description="Cytoplasmic" evidence="2">
    <location>
        <begin position="231"/>
        <end position="264"/>
    </location>
</feature>
<feature type="transmembrane region" description="Helical" evidence="2">
    <location>
        <begin position="265"/>
        <end position="285"/>
    </location>
</feature>
<feature type="topological domain" description="Extracellular" evidence="2">
    <location>
        <begin position="286"/>
        <end position="302"/>
    </location>
</feature>
<feature type="transmembrane region" description="Helical" evidence="2">
    <location>
        <begin position="303"/>
        <end position="323"/>
    </location>
</feature>
<feature type="topological domain" description="Cytoplasmic" evidence="2">
    <location>
        <begin position="324"/>
        <end position="335"/>
    </location>
</feature>
<feature type="transmembrane region" description="Helical" evidence="2">
    <location>
        <begin position="336"/>
        <end position="356"/>
    </location>
</feature>
<feature type="topological domain" description="Extracellular" evidence="2">
    <location>
        <begin position="357"/>
        <end position="406"/>
    </location>
</feature>
<feature type="transmembrane region" description="Helical" evidence="2">
    <location>
        <begin position="407"/>
        <end position="427"/>
    </location>
</feature>
<feature type="topological domain" description="Cytoplasmic" evidence="2">
    <location>
        <begin position="428"/>
        <end position="445"/>
    </location>
</feature>
<feature type="transmembrane region" description="Helical" evidence="2">
    <location>
        <begin position="446"/>
        <end position="466"/>
    </location>
</feature>
<feature type="topological domain" description="Extracellular" evidence="2">
    <location>
        <begin position="467"/>
        <end position="476"/>
    </location>
</feature>
<feature type="transmembrane region" description="Helical" evidence="2">
    <location>
        <begin position="477"/>
        <end position="497"/>
    </location>
</feature>
<feature type="topological domain" description="Cytoplasmic" evidence="2">
    <location>
        <begin position="498"/>
        <end position="510"/>
    </location>
</feature>
<feature type="short sequence motif" description="Dileucine internalization motif" evidence="1">
    <location>
        <begin position="14"/>
        <end position="15"/>
    </location>
</feature>
<feature type="glycosylation site" description="N-linked (GlcNAc...) asparagine" evidence="2">
    <location>
        <position position="369"/>
    </location>
</feature>
<feature type="glycosylation site" description="N-linked (GlcNAc...) asparagine" evidence="2">
    <location>
        <position position="374"/>
    </location>
</feature>
<proteinExistence type="evidence at transcript level"/>
<reference key="1">
    <citation type="submission" date="2004-06" db="EMBL/GenBank/DDBJ databases">
        <authorList>
            <consortium name="NIH - Xenopus Gene Collection (XGC) project"/>
        </authorList>
    </citation>
    <scope>NUCLEOTIDE SEQUENCE [LARGE SCALE MRNA]</scope>
    <source>
        <tissue>Ovary</tissue>
    </source>
</reference>
<comment type="function">
    <text evidence="3">May be a carrier that transport small solutes by using chemiosmotic ion gradients.</text>
</comment>
<comment type="subcellular location">
    <subcellularLocation>
        <location evidence="1">Lysosome membrane</location>
        <topology evidence="1">Multi-pass membrane protein</topology>
    </subcellularLocation>
    <text evidence="1">Sorting to lysosomes involves tyrosine- and/or dileucine-based motifs.</text>
</comment>
<comment type="similarity">
    <text evidence="3">Belongs to the major facilitator superfamily.</text>
</comment>
<protein>
    <recommendedName>
        <fullName>Major facilitator superfamily domain-containing protein 8</fullName>
    </recommendedName>
</protein>
<keyword id="KW-0325">Glycoprotein</keyword>
<keyword id="KW-0458">Lysosome</keyword>
<keyword id="KW-0472">Membrane</keyword>
<keyword id="KW-1185">Reference proteome</keyword>
<keyword id="KW-0812">Transmembrane</keyword>
<keyword id="KW-1133">Transmembrane helix</keyword>
<keyword id="KW-0813">Transport</keyword>
<organism>
    <name type="scientific">Xenopus laevis</name>
    <name type="common">African clawed frog</name>
    <dbReference type="NCBI Taxonomy" id="8355"/>
    <lineage>
        <taxon>Eukaryota</taxon>
        <taxon>Metazoa</taxon>
        <taxon>Chordata</taxon>
        <taxon>Craniata</taxon>
        <taxon>Vertebrata</taxon>
        <taxon>Euteleostomi</taxon>
        <taxon>Amphibia</taxon>
        <taxon>Batrachia</taxon>
        <taxon>Anura</taxon>
        <taxon>Pipoidea</taxon>
        <taxon>Pipidae</taxon>
        <taxon>Xenopodinae</taxon>
        <taxon>Xenopus</taxon>
        <taxon>Xenopus</taxon>
    </lineage>
</organism>
<accession>Q6GPQ3</accession>
<sequence length="510" mass="56163">MASIDDDDDERTPLLQDSHIGELVETQKQLKSRWWSIRVMYLTMFLSSVGFSIVMTSIWPYLQKVDQSADASFLGWVIASFSLGQMVASPLFGLWSNHRPRREPLVVSITILVAASCLYAYVHVPASHNKYYMLLARTFVGFGSGNVAVVRSYVAGATSLSERTGAMANISAFQAMGFILGPAFQAALSVIGETGITINGISLQVNMYTAPALMGALLGIGNIILIFAIFREHRVDDLEKNVSSINSESEVTDVEKANEGPIDQIAVISSNILFFVVLFVFAIFETISTPLTMDMYAWTRTQAVFYNGIILAAVGVESVIVFLTVKILCKKTGERVLLLGGLAVIWIGFFILLPWGNQMPKIQWTDLQNATIHNTTQWTSSIPSSGNHSVEPTGCPVIQTWCLYTPVIHLAQYLTSDILIGVGYPICNVMSYTLYSKIIGPKPQGLYMGWLTAAGSAARTLGPVFVSQIYTHLGTRWTFGIICAFVALSLLHLTAVYKRLIPFSTRYERL</sequence>
<name>MFSD8_XENLA</name>
<gene>
    <name type="primary">mfsd8</name>
</gene>
<dbReference type="EMBL" id="BC073059">
    <property type="protein sequence ID" value="AAH73059.1"/>
    <property type="molecule type" value="mRNA"/>
</dbReference>
<dbReference type="RefSeq" id="NP_001085636.1">
    <property type="nucleotide sequence ID" value="NM_001092167.1"/>
</dbReference>
<dbReference type="SMR" id="Q6GPQ3"/>
<dbReference type="GlyCosmos" id="Q6GPQ3">
    <property type="glycosylation" value="2 sites, No reported glycans"/>
</dbReference>
<dbReference type="DNASU" id="444062"/>
<dbReference type="GeneID" id="444062"/>
<dbReference type="KEGG" id="xla:444062"/>
<dbReference type="AGR" id="Xenbase:XB-GENE-998879"/>
<dbReference type="CTD" id="444062"/>
<dbReference type="Xenbase" id="XB-GENE-998879">
    <property type="gene designation" value="mfsd8.L"/>
</dbReference>
<dbReference type="OrthoDB" id="370281at2759"/>
<dbReference type="Proteomes" id="UP000186698">
    <property type="component" value="Chromosome 1L"/>
</dbReference>
<dbReference type="Bgee" id="444062">
    <property type="expression patterns" value="Expressed in egg cell and 19 other cell types or tissues"/>
</dbReference>
<dbReference type="GO" id="GO:0005765">
    <property type="term" value="C:lysosomal membrane"/>
    <property type="evidence" value="ECO:0000318"/>
    <property type="project" value="GO_Central"/>
</dbReference>
<dbReference type="GO" id="GO:0005254">
    <property type="term" value="F:chloride channel activity"/>
    <property type="evidence" value="ECO:0000318"/>
    <property type="project" value="GO_Central"/>
</dbReference>
<dbReference type="GO" id="GO:0015111">
    <property type="term" value="F:iodide transmembrane transporter activity"/>
    <property type="evidence" value="ECO:0000318"/>
    <property type="project" value="GO_Central"/>
</dbReference>
<dbReference type="GO" id="GO:0097352">
    <property type="term" value="P:autophagosome maturation"/>
    <property type="evidence" value="ECO:0000318"/>
    <property type="project" value="GO_Central"/>
</dbReference>
<dbReference type="GO" id="GO:0007040">
    <property type="term" value="P:lysosome organization"/>
    <property type="evidence" value="ECO:0000318"/>
    <property type="project" value="GO_Central"/>
</dbReference>
<dbReference type="CDD" id="cd17326">
    <property type="entry name" value="MFS_MFSD8"/>
    <property type="match status" value="1"/>
</dbReference>
<dbReference type="Gene3D" id="1.20.1250.20">
    <property type="entry name" value="MFS general substrate transporter like domains"/>
    <property type="match status" value="1"/>
</dbReference>
<dbReference type="InterPro" id="IPR011701">
    <property type="entry name" value="MFS"/>
</dbReference>
<dbReference type="InterPro" id="IPR020846">
    <property type="entry name" value="MFS_dom"/>
</dbReference>
<dbReference type="InterPro" id="IPR051068">
    <property type="entry name" value="MFS_Domain-Containing_Protein"/>
</dbReference>
<dbReference type="InterPro" id="IPR036259">
    <property type="entry name" value="MFS_trans_sf"/>
</dbReference>
<dbReference type="PANTHER" id="PTHR23510">
    <property type="entry name" value="INNER MEMBRANE TRANSPORT PROTEIN YAJR"/>
    <property type="match status" value="1"/>
</dbReference>
<dbReference type="PANTHER" id="PTHR23510:SF3">
    <property type="entry name" value="MAJOR FACILITATOR SUPERFAMILY DOMAIN-CONTAINING PROTEIN 8"/>
    <property type="match status" value="1"/>
</dbReference>
<dbReference type="Pfam" id="PF07690">
    <property type="entry name" value="MFS_1"/>
    <property type="match status" value="2"/>
</dbReference>
<dbReference type="SUPFAM" id="SSF103473">
    <property type="entry name" value="MFS general substrate transporter"/>
    <property type="match status" value="1"/>
</dbReference>
<dbReference type="PROSITE" id="PS50850">
    <property type="entry name" value="MFS"/>
    <property type="match status" value="1"/>
</dbReference>
<evidence type="ECO:0000250" key="1"/>
<evidence type="ECO:0000255" key="2"/>
<evidence type="ECO:0000305" key="3"/>